<evidence type="ECO:0000250" key="1"/>
<evidence type="ECO:0000255" key="2"/>
<evidence type="ECO:0000305" key="3"/>
<feature type="chain" id="PRO_0000082236" description="Taste receptor type 2 member 9">
    <location>
        <begin position="1"/>
        <end position="312"/>
    </location>
</feature>
<feature type="topological domain" description="Extracellular" evidence="2">
    <location>
        <begin position="1"/>
        <end position="9"/>
    </location>
</feature>
<feature type="transmembrane region" description="Helical; Name=1" evidence="2">
    <location>
        <begin position="10"/>
        <end position="32"/>
    </location>
</feature>
<feature type="topological domain" description="Cytoplasmic" evidence="2">
    <location>
        <begin position="33"/>
        <end position="52"/>
    </location>
</feature>
<feature type="transmembrane region" description="Helical; Name=2" evidence="2">
    <location>
        <begin position="53"/>
        <end position="72"/>
    </location>
</feature>
<feature type="topological domain" description="Extracellular" evidence="2">
    <location>
        <begin position="73"/>
        <end position="86"/>
    </location>
</feature>
<feature type="transmembrane region" description="Helical; Name=3" evidence="2">
    <location>
        <begin position="87"/>
        <end position="109"/>
    </location>
</feature>
<feature type="topological domain" description="Cytoplasmic" evidence="2">
    <location>
        <begin position="110"/>
        <end position="128"/>
    </location>
</feature>
<feature type="transmembrane region" description="Helical; Name=4" evidence="2">
    <location>
        <begin position="129"/>
        <end position="146"/>
    </location>
</feature>
<feature type="topological domain" description="Extracellular" evidence="2">
    <location>
        <begin position="147"/>
        <end position="180"/>
    </location>
</feature>
<feature type="transmembrane region" description="Helical; Name=5" evidence="2">
    <location>
        <begin position="181"/>
        <end position="203"/>
    </location>
</feature>
<feature type="topological domain" description="Cytoplasmic" evidence="2">
    <location>
        <begin position="204"/>
        <end position="234"/>
    </location>
</feature>
<feature type="transmembrane region" description="Helical; Name=6" evidence="2">
    <location>
        <begin position="235"/>
        <end position="257"/>
    </location>
</feature>
<feature type="topological domain" description="Extracellular" evidence="2">
    <location>
        <begin position="258"/>
        <end position="261"/>
    </location>
</feature>
<feature type="transmembrane region" description="Helical; Name=7" evidence="2">
    <location>
        <begin position="262"/>
        <end position="284"/>
    </location>
</feature>
<feature type="topological domain" description="Cytoplasmic" evidence="2">
    <location>
        <begin position="285"/>
        <end position="312"/>
    </location>
</feature>
<feature type="glycosylation site" description="N-linked (GlcNAc...) asparagine" evidence="2">
    <location>
        <position position="164"/>
    </location>
</feature>
<protein>
    <recommendedName>
        <fullName>Taste receptor type 2 member 9</fullName>
        <shortName>T2R9</shortName>
    </recommendedName>
</protein>
<keyword id="KW-0297">G-protein coupled receptor</keyword>
<keyword id="KW-0325">Glycoprotein</keyword>
<keyword id="KW-0472">Membrane</keyword>
<keyword id="KW-0675">Receptor</keyword>
<keyword id="KW-0716">Sensory transduction</keyword>
<keyword id="KW-0919">Taste</keyword>
<keyword id="KW-0807">Transducer</keyword>
<keyword id="KW-0812">Transmembrane</keyword>
<keyword id="KW-1133">Transmembrane helix</keyword>
<sequence length="312" mass="35563">MPSAIEAIYIILIAGELTIGIWGNGFIVLVNCIDWLKRRDVSLIDIILISLAISRICLLXVISLDGFFMLLFPTTYGNSVLVSIVBIVWTFANNSSLWFTSCLSIFYLLKIANISHPFFFWLKLKINKVILAILLGSFLISLVISVXMNDDMWYHLFKVSHEENITWEFKVSKIPGTFKQLTLNLGAMVPFILCLISFSLLLFSLVRHTKQIQLXATGFRDPSTEAHMRAIKAVIIFLLLLIVYYPVFLVMTSSALIPQGKLVLMIGDIVTITFPSSHSFILIMGNSKLREAFLKMLRFVKRFLRRRKPFVP</sequence>
<comment type="function">
    <text evidence="1">Gustducin-coupled receptor implicated in the perception of bitter compounds in the oral cavity and the gastrointestinal tract. Signals through PLCB2 and the calcium-regulated cation channel TRPM5 (By similarity).</text>
</comment>
<comment type="subcellular location">
    <subcellularLocation>
        <location>Membrane</location>
        <topology>Multi-pass membrane protein</topology>
    </subcellularLocation>
</comment>
<comment type="miscellaneous">
    <text>Several bitter taste receptors are expressed in a single taste receptor cell.</text>
</comment>
<comment type="similarity">
    <text evidence="3">Belongs to the G-protein coupled receptor T2R family.</text>
</comment>
<reference key="1">
    <citation type="journal article" date="2005" name="Mol. Biol. Evol.">
        <title>Evolution of bitter taste receptors in humans and apes.</title>
        <authorList>
            <person name="Fischer A."/>
            <person name="Gilad Y."/>
            <person name="Man O."/>
            <person name="Paeaebo S."/>
        </authorList>
    </citation>
    <scope>NUCLEOTIDE SEQUENCE [GENOMIC DNA]</scope>
</reference>
<accession>Q645V9</accession>
<gene>
    <name type="primary">TAS2R9</name>
</gene>
<proteinExistence type="inferred from homology"/>
<organism>
    <name type="scientific">Pongo pygmaeus</name>
    <name type="common">Bornean orangutan</name>
    <dbReference type="NCBI Taxonomy" id="9600"/>
    <lineage>
        <taxon>Eukaryota</taxon>
        <taxon>Metazoa</taxon>
        <taxon>Chordata</taxon>
        <taxon>Craniata</taxon>
        <taxon>Vertebrata</taxon>
        <taxon>Euteleostomi</taxon>
        <taxon>Mammalia</taxon>
        <taxon>Eutheria</taxon>
        <taxon>Euarchontoglires</taxon>
        <taxon>Primates</taxon>
        <taxon>Haplorrhini</taxon>
        <taxon>Catarrhini</taxon>
        <taxon>Hominidae</taxon>
        <taxon>Pongo</taxon>
    </lineage>
</organism>
<name>TA2R9_PONPY</name>
<dbReference type="EMBL" id="AY724967">
    <property type="protein sequence ID" value="AAU21160.1"/>
    <property type="molecule type" value="Genomic_DNA"/>
</dbReference>
<dbReference type="GlyCosmos" id="Q645V9">
    <property type="glycosylation" value="1 site, No reported glycans"/>
</dbReference>
<dbReference type="GO" id="GO:0005886">
    <property type="term" value="C:plasma membrane"/>
    <property type="evidence" value="ECO:0007669"/>
    <property type="project" value="UniProtKB-ARBA"/>
</dbReference>
<dbReference type="GO" id="GO:0033038">
    <property type="term" value="F:bitter taste receptor activity"/>
    <property type="evidence" value="ECO:0007669"/>
    <property type="project" value="InterPro"/>
</dbReference>
<dbReference type="GO" id="GO:0004930">
    <property type="term" value="F:G protein-coupled receptor activity"/>
    <property type="evidence" value="ECO:0007669"/>
    <property type="project" value="UniProtKB-KW"/>
</dbReference>
<dbReference type="CDD" id="cd15023">
    <property type="entry name" value="7tm_TAS2R7-like"/>
    <property type="match status" value="1"/>
</dbReference>
<dbReference type="FunFam" id="1.20.1070.10:FF:000042">
    <property type="entry name" value="Taste receptor type 2 member 7"/>
    <property type="match status" value="1"/>
</dbReference>
<dbReference type="Gene3D" id="1.20.1070.10">
    <property type="entry name" value="Rhodopsin 7-helix transmembrane proteins"/>
    <property type="match status" value="1"/>
</dbReference>
<dbReference type="InterPro" id="IPR017452">
    <property type="entry name" value="GPCR_Rhodpsn_7TM"/>
</dbReference>
<dbReference type="InterPro" id="IPR007960">
    <property type="entry name" value="TAS2R"/>
</dbReference>
<dbReference type="PANTHER" id="PTHR11394">
    <property type="entry name" value="TASTE RECEPTOR TYPE 2"/>
    <property type="match status" value="1"/>
</dbReference>
<dbReference type="PANTHER" id="PTHR11394:SF29">
    <property type="entry name" value="TASTE RECEPTOR TYPE 2 MEMBER 9"/>
    <property type="match status" value="1"/>
</dbReference>
<dbReference type="Pfam" id="PF05296">
    <property type="entry name" value="TAS2R"/>
    <property type="match status" value="1"/>
</dbReference>
<dbReference type="SUPFAM" id="SSF81321">
    <property type="entry name" value="Family A G protein-coupled receptor-like"/>
    <property type="match status" value="1"/>
</dbReference>
<dbReference type="PROSITE" id="PS50262">
    <property type="entry name" value="G_PROTEIN_RECEP_F1_2"/>
    <property type="match status" value="1"/>
</dbReference>